<proteinExistence type="inferred from homology"/>
<organism>
    <name type="scientific">Yersinia pseudotuberculosis serotype IB (strain PB1/+)</name>
    <dbReference type="NCBI Taxonomy" id="502801"/>
    <lineage>
        <taxon>Bacteria</taxon>
        <taxon>Pseudomonadati</taxon>
        <taxon>Pseudomonadota</taxon>
        <taxon>Gammaproteobacteria</taxon>
        <taxon>Enterobacterales</taxon>
        <taxon>Yersiniaceae</taxon>
        <taxon>Yersinia</taxon>
    </lineage>
</organism>
<sequence>MAQANLSEILFKPKFKHPETSTLVRRTHCNHVVNIHSALDGDTANHWYRMINRLMWTWRGIDPLEIEEVLSRIACSKAEHSNNELLDTVVGYRNGNWIYEWANQGMMWQQKAMEETDPGSAGQFWLNAANLYSIASYPHLKGDELSEQAEVLSNRAYEEAAKYLPYTLKELTFPISDGGSLSGFLHMPTVGSAPFPTVLMCGGLDTLQSDYHRLFRDYLEPKGIAMLTIDLPSVGASSRWKLTQDTSYLHQQVLQALADVPWVDHQRVSVFGFRFGANVAVRLGYLEPQRVRAVACLGPIVHHLLCNSDSLRKVPDMYMDVMASRLGMADSTDETLNTEMNRYSLKTQGLLGRRCQTPMLAGFWENDPFSPKEEAKLICSSSADGKLLAIPSKPLYENFHRALLQTSEWLEDKMR</sequence>
<evidence type="ECO:0000255" key="1">
    <source>
        <dbReference type="HAMAP-Rule" id="MF_01063"/>
    </source>
</evidence>
<dbReference type="EC" id="3.1.1.1" evidence="1"/>
<dbReference type="EMBL" id="CP001048">
    <property type="protein sequence ID" value="ACC87925.1"/>
    <property type="molecule type" value="Genomic_DNA"/>
</dbReference>
<dbReference type="RefSeq" id="WP_002208703.1">
    <property type="nucleotide sequence ID" value="NZ_CP009780.1"/>
</dbReference>
<dbReference type="SMR" id="B2K659"/>
<dbReference type="ESTHER" id="yerpe-y3224">
    <property type="family name" value="Duf_1100-R"/>
</dbReference>
<dbReference type="GeneID" id="57975494"/>
<dbReference type="KEGG" id="ypb:YPTS_0944"/>
<dbReference type="PATRIC" id="fig|502801.10.peg.281"/>
<dbReference type="GO" id="GO:0106435">
    <property type="term" value="F:carboxylesterase activity"/>
    <property type="evidence" value="ECO:0007669"/>
    <property type="project" value="UniProtKB-EC"/>
</dbReference>
<dbReference type="FunFam" id="3.40.50.1820:FF:000022">
    <property type="entry name" value="Esterase FrsA"/>
    <property type="match status" value="1"/>
</dbReference>
<dbReference type="Gene3D" id="3.40.50.1820">
    <property type="entry name" value="alpha/beta hydrolase"/>
    <property type="match status" value="1"/>
</dbReference>
<dbReference type="HAMAP" id="MF_01063">
    <property type="entry name" value="FrsA"/>
    <property type="match status" value="1"/>
</dbReference>
<dbReference type="InterPro" id="IPR029058">
    <property type="entry name" value="AB_hydrolase_fold"/>
</dbReference>
<dbReference type="InterPro" id="IPR043423">
    <property type="entry name" value="FrsA"/>
</dbReference>
<dbReference type="InterPro" id="IPR010520">
    <property type="entry name" value="FrsA-like"/>
</dbReference>
<dbReference type="InterPro" id="IPR050261">
    <property type="entry name" value="FrsA_esterase"/>
</dbReference>
<dbReference type="NCBIfam" id="NF003460">
    <property type="entry name" value="PRK05077.1"/>
    <property type="match status" value="1"/>
</dbReference>
<dbReference type="PANTHER" id="PTHR22946">
    <property type="entry name" value="DIENELACTONE HYDROLASE DOMAIN-CONTAINING PROTEIN-RELATED"/>
    <property type="match status" value="1"/>
</dbReference>
<dbReference type="PANTHER" id="PTHR22946:SF4">
    <property type="entry name" value="ESTERASE FRSA"/>
    <property type="match status" value="1"/>
</dbReference>
<dbReference type="Pfam" id="PF06500">
    <property type="entry name" value="FrsA-like"/>
    <property type="match status" value="1"/>
</dbReference>
<dbReference type="SUPFAM" id="SSF53474">
    <property type="entry name" value="alpha/beta-Hydrolases"/>
    <property type="match status" value="1"/>
</dbReference>
<protein>
    <recommendedName>
        <fullName evidence="1">Esterase FrsA</fullName>
        <ecNumber evidence="1">3.1.1.1</ecNumber>
    </recommendedName>
</protein>
<accession>B2K659</accession>
<reference key="1">
    <citation type="submission" date="2008-04" db="EMBL/GenBank/DDBJ databases">
        <title>Complete sequence of Yersinia pseudotuberculosis PB1/+.</title>
        <authorList>
            <person name="Copeland A."/>
            <person name="Lucas S."/>
            <person name="Lapidus A."/>
            <person name="Glavina del Rio T."/>
            <person name="Dalin E."/>
            <person name="Tice H."/>
            <person name="Bruce D."/>
            <person name="Goodwin L."/>
            <person name="Pitluck S."/>
            <person name="Munk A.C."/>
            <person name="Brettin T."/>
            <person name="Detter J.C."/>
            <person name="Han C."/>
            <person name="Tapia R."/>
            <person name="Schmutz J."/>
            <person name="Larimer F."/>
            <person name="Land M."/>
            <person name="Hauser L."/>
            <person name="Challacombe J.F."/>
            <person name="Green L."/>
            <person name="Lindler L.E."/>
            <person name="Nikolich M.P."/>
            <person name="Richardson P."/>
        </authorList>
    </citation>
    <scope>NUCLEOTIDE SEQUENCE [LARGE SCALE GENOMIC DNA]</scope>
    <source>
        <strain>PB1/+</strain>
    </source>
</reference>
<gene>
    <name evidence="1" type="primary">frsA</name>
    <name type="ordered locus">YPTS_0944</name>
</gene>
<keyword id="KW-0378">Hydrolase</keyword>
<keyword id="KW-0719">Serine esterase</keyword>
<comment type="function">
    <text evidence="1">Catalyzes the hydrolysis of esters.</text>
</comment>
<comment type="catalytic activity">
    <reaction evidence="1">
        <text>a carboxylic ester + H2O = an alcohol + a carboxylate + H(+)</text>
        <dbReference type="Rhea" id="RHEA:21164"/>
        <dbReference type="ChEBI" id="CHEBI:15377"/>
        <dbReference type="ChEBI" id="CHEBI:15378"/>
        <dbReference type="ChEBI" id="CHEBI:29067"/>
        <dbReference type="ChEBI" id="CHEBI:30879"/>
        <dbReference type="ChEBI" id="CHEBI:33308"/>
        <dbReference type="EC" id="3.1.1.1"/>
    </reaction>
</comment>
<comment type="similarity">
    <text evidence="1">Belongs to the FrsA family.</text>
</comment>
<name>FRSA_YERPB</name>
<feature type="chain" id="PRO_1000136529" description="Esterase FrsA">
    <location>
        <begin position="1"/>
        <end position="415"/>
    </location>
</feature>